<proteinExistence type="inferred from homology"/>
<dbReference type="EMBL" id="M35027">
    <property type="protein sequence ID" value="AAA48139.1"/>
    <property type="molecule type" value="Genomic_DNA"/>
</dbReference>
<dbReference type="PIR" id="A42519">
    <property type="entry name" value="A42519"/>
</dbReference>
<dbReference type="Proteomes" id="UP000008269">
    <property type="component" value="Segment"/>
</dbReference>
<dbReference type="GO" id="GO:0016020">
    <property type="term" value="C:membrane"/>
    <property type="evidence" value="ECO:0007669"/>
    <property type="project" value="UniProtKB-KW"/>
</dbReference>
<dbReference type="GO" id="GO:0019031">
    <property type="term" value="C:viral envelope"/>
    <property type="evidence" value="ECO:0007669"/>
    <property type="project" value="UniProtKB-KW"/>
</dbReference>
<dbReference type="GO" id="GO:0055036">
    <property type="term" value="C:virion membrane"/>
    <property type="evidence" value="ECO:0007669"/>
    <property type="project" value="UniProtKB-SubCell"/>
</dbReference>
<dbReference type="GO" id="GO:0005524">
    <property type="term" value="F:ATP binding"/>
    <property type="evidence" value="ECO:0007669"/>
    <property type="project" value="UniProtKB-KW"/>
</dbReference>
<dbReference type="GO" id="GO:0003677">
    <property type="term" value="F:DNA binding"/>
    <property type="evidence" value="ECO:0007669"/>
    <property type="project" value="UniProtKB-KW"/>
</dbReference>
<dbReference type="GO" id="GO:0004386">
    <property type="term" value="F:helicase activity"/>
    <property type="evidence" value="ECO:0007669"/>
    <property type="project" value="UniProtKB-KW"/>
</dbReference>
<dbReference type="GO" id="GO:0016787">
    <property type="term" value="F:hydrolase activity"/>
    <property type="evidence" value="ECO:0007669"/>
    <property type="project" value="UniProtKB-KW"/>
</dbReference>
<dbReference type="GO" id="GO:0006353">
    <property type="term" value="P:DNA-templated transcription termination"/>
    <property type="evidence" value="ECO:0007669"/>
    <property type="project" value="UniProtKB-KW"/>
</dbReference>
<dbReference type="InterPro" id="IPR007977">
    <property type="entry name" value="Poxvirus_OPG144"/>
</dbReference>
<dbReference type="Pfam" id="PF05313">
    <property type="entry name" value="Pox_P21"/>
    <property type="match status" value="1"/>
</dbReference>
<sequence>MSYLRYYNMLDDFSAGAGVLDKDLFTEEQQQSFMPKDGGMMQNDYGGMNDYLGIFKNNDVRTLLGLILFVLALYSPPLISILMIFISSFLLPLTSLVITYCLVTQMYRGGNGNTVGMSIVCIVAAVIIMAINVFTNSQIFNIISYIILFILFFAYVMNIERQDYRRSINVTIPEQYTCNKPYTAGNKVDVDIPTFNSLNTDDY</sequence>
<accession>P68592</accession>
<accession>P16711</accession>
<keyword id="KW-0067">ATP-binding</keyword>
<keyword id="KW-1015">Disulfide bond</keyword>
<keyword id="KW-0238">DNA-binding</keyword>
<keyword id="KW-0347">Helicase</keyword>
<keyword id="KW-0378">Hydrolase</keyword>
<keyword id="KW-0426">Late protein</keyword>
<keyword id="KW-0472">Membrane</keyword>
<keyword id="KW-0547">Nucleotide-binding</keyword>
<keyword id="KW-0597">Phosphoprotein</keyword>
<keyword id="KW-1185">Reference proteome</keyword>
<keyword id="KW-0804">Transcription</keyword>
<keyword id="KW-0805">Transcription regulation</keyword>
<keyword id="KW-0806">Transcription termination</keyword>
<keyword id="KW-0812">Transmembrane</keyword>
<keyword id="KW-1133">Transmembrane helix</keyword>
<keyword id="KW-0261">Viral envelope protein</keyword>
<keyword id="KW-0946">Virion</keyword>
<comment type="function">
    <text evidence="2">Envelope protein which participates in virus morphogenesis. Needed for an early step in viral crescent membrane formation by interacting with OPG125 scaffold protein. Its interaction with OPG125 scaffold protein leads to the formation of rigid, crescent-shaped membranes that assemble around the cytoplasmic virus factory. Acts as a membrane anchor for the protein OPG154. OPG144-OPG154 virus envelope protein might be involved in fusion or attachment, and can further associate with OPG153.</text>
</comment>
<comment type="subunit">
    <text evidence="2">Homodimer; disulfide-linked. Interacts (via N-terminus) with OPG125 scaffold; this interaction helps OPG125 to associate with membranes. Interacts with OPG140. Interacts with OPG154; this interaction allows OPG154 to be anchored in the mature virion (MV) membrane. Part of a complex composed of OPG144, OPG153 and OPG154.</text>
</comment>
<comment type="subcellular location">
    <subcellularLocation>
        <location evidence="2">Virion membrane</location>
        <topology evidence="2">Multi-pass membrane protein</topology>
    </subcellularLocation>
    <text evidence="2">The 23 kDa precursor is associated with immature virions (IV) and the final 21 kDa form is present in mature virions (MV).</text>
</comment>
<comment type="PTM">
    <text evidence="2">The 23 kDa precursor is cleaved into a final 21 kDa form by the OPG083 protease during virus maturation.</text>
</comment>
<comment type="PTM">
    <text evidence="2">Phosphorylated on tyrosine and threonine. Its phosphorylation state is regulated by the OPG054 kinase and the OPG106 phosphatase. Phosphorylation by OPG054 kinase seems to be required to form the membranes associated with IV.</text>
</comment>
<comment type="PTM">
    <text evidence="2">Not glycosylated.</text>
</comment>
<comment type="similarity">
    <text evidence="3">Belongs to the orthopoxvirus OPG144 family.</text>
</comment>
<organism>
    <name type="scientific">Vaccinia virus (strain Copenhagen)</name>
    <name type="common">VACV</name>
    <dbReference type="NCBI Taxonomy" id="10249"/>
    <lineage>
        <taxon>Viruses</taxon>
        <taxon>Varidnaviria</taxon>
        <taxon>Bamfordvirae</taxon>
        <taxon>Nucleocytoviricota</taxon>
        <taxon>Pokkesviricetes</taxon>
        <taxon>Chitovirales</taxon>
        <taxon>Poxviridae</taxon>
        <taxon>Chordopoxvirinae</taxon>
        <taxon>Orthopoxvirus</taxon>
        <taxon>Vaccinia virus</taxon>
    </lineage>
</organism>
<reference key="1">
    <citation type="journal article" date="1990" name="Virology">
        <title>The complete DNA sequence of vaccinia virus.</title>
        <authorList>
            <person name="Goebel S.J."/>
            <person name="Johnson G.P."/>
            <person name="Perkus M.E."/>
            <person name="Davis S.W."/>
            <person name="Winslow J.P."/>
            <person name="Paoletti E."/>
        </authorList>
    </citation>
    <scope>NUCLEOTIDE SEQUENCE [LARGE SCALE GENOMIC DNA]</scope>
</reference>
<reference key="2">
    <citation type="journal article" date="1990" name="Virology">
        <title>Appendix to 'The complete DNA sequence of vaccinia virus'.</title>
        <authorList>
            <person name="Goebel S.J."/>
            <person name="Johnson G.P."/>
            <person name="Perkus M.E."/>
            <person name="Davis S.W."/>
            <person name="Winslow J.P."/>
            <person name="Paoletti E."/>
        </authorList>
    </citation>
    <scope>NUCLEOTIDE SEQUENCE [LARGE SCALE GENOMIC DNA]</scope>
</reference>
<organismHost>
    <name type="scientific">Homo sapiens</name>
    <name type="common">Human</name>
    <dbReference type="NCBI Taxonomy" id="9606"/>
</organismHost>
<feature type="chain" id="PRO_0000099257" description="Virion membrane protein OPG144 precursor">
    <location>
        <begin position="1"/>
        <end position="203"/>
    </location>
</feature>
<feature type="propeptide" id="PRO_0000413880" evidence="2">
    <location>
        <begin position="1"/>
        <end position="16"/>
    </location>
</feature>
<feature type="chain" id="PRO_0000413881" description="Mature 21 kDa protein OPG144" evidence="1">
    <location>
        <begin position="17"/>
        <end position="185"/>
    </location>
</feature>
<feature type="propeptide" id="PRO_0000413882" evidence="2">
    <location>
        <begin position="185"/>
        <end position="203"/>
    </location>
</feature>
<feature type="topological domain" description="Virion surface" evidence="1">
    <location>
        <begin position="1"/>
        <end position="65"/>
    </location>
</feature>
<feature type="transmembrane region" description="Helical" evidence="1">
    <location>
        <begin position="66"/>
        <end position="86"/>
    </location>
</feature>
<feature type="topological domain" description="Intravirion" evidence="1">
    <location>
        <begin position="87"/>
        <end position="138"/>
    </location>
</feature>
<feature type="transmembrane region" description="Helical" evidence="1">
    <location>
        <begin position="139"/>
        <end position="159"/>
    </location>
</feature>
<feature type="topological domain" description="Virion surface" evidence="1">
    <location>
        <begin position="160"/>
        <end position="203"/>
    </location>
</feature>
<feature type="region of interest" description="Binding to OPG125 scaffold protein" evidence="2">
    <location>
        <begin position="1"/>
        <end position="38"/>
    </location>
</feature>
<feature type="site" description="Cleavage; by OPG083 protease" evidence="2">
    <location>
        <begin position="16"/>
        <end position="17"/>
    </location>
</feature>
<feature type="site" description="Cleavage; by OPG083 protease" evidence="2">
    <location>
        <begin position="185"/>
        <end position="186"/>
    </location>
</feature>
<feature type="modified residue" description="Phosphotyrosine" evidence="2">
    <location>
        <position position="203"/>
    </location>
</feature>
<feature type="disulfide bond" evidence="2">
    <location>
        <begin position="101"/>
        <end position="121"/>
    </location>
</feature>
<feature type="disulfide bond" description="Interchain" evidence="2">
    <location>
        <position position="178"/>
    </location>
</feature>
<evidence type="ECO:0000250" key="1"/>
<evidence type="ECO:0000250" key="2">
    <source>
        <dbReference type="UniProtKB" id="P68593"/>
    </source>
</evidence>
<evidence type="ECO:0000305" key="3"/>
<gene>
    <name type="primary">OPG144</name>
    <name type="ORF">A17L</name>
</gene>
<name>PG144_VACCC</name>
<protein>
    <recommendedName>
        <fullName>Virion membrane protein OPG144 precursor</fullName>
    </recommendedName>
    <alternativeName>
        <fullName>23 kDa late protein</fullName>
    </alternativeName>
    <component>
        <recommendedName>
            <fullName>Mature 21 kDa protein OPG144</fullName>
        </recommendedName>
    </component>
</protein>